<dbReference type="EC" id="3.1.26.-"/>
<dbReference type="EMBL" id="AP003933">
    <property type="protein sequence ID" value="BAD87969.1"/>
    <property type="molecule type" value="Genomic_DNA"/>
</dbReference>
<dbReference type="EMBL" id="AP004258">
    <property type="protein sequence ID" value="BAD88131.1"/>
    <property type="molecule type" value="Genomic_DNA"/>
</dbReference>
<dbReference type="EMBL" id="AP008207">
    <property type="protein sequence ID" value="BAF05220.1"/>
    <property type="molecule type" value="Genomic_DNA"/>
</dbReference>
<dbReference type="EMBL" id="AP014957">
    <property type="protein sequence ID" value="BAS72651.1"/>
    <property type="molecule type" value="Genomic_DNA"/>
</dbReference>
<dbReference type="EMBL" id="AK067932">
    <property type="protein sequence ID" value="BAG90671.1"/>
    <property type="molecule type" value="mRNA"/>
</dbReference>
<dbReference type="RefSeq" id="XP_015626271.1">
    <property type="nucleotide sequence ID" value="XM_015770785.1"/>
</dbReference>
<dbReference type="SMR" id="Q5JK90"/>
<dbReference type="FunCoup" id="Q5JK90">
    <property type="interactions" value="2"/>
</dbReference>
<dbReference type="STRING" id="39947.Q5JK90"/>
<dbReference type="PaxDb" id="39947-Q5JK90"/>
<dbReference type="EnsemblPlants" id="Os01t0551100-01">
    <property type="protein sequence ID" value="Os01t0551100-01"/>
    <property type="gene ID" value="Os01g0551100"/>
</dbReference>
<dbReference type="Gramene" id="Os01t0551100-01">
    <property type="protein sequence ID" value="Os01t0551100-01"/>
    <property type="gene ID" value="Os01g0551100"/>
</dbReference>
<dbReference type="KEGG" id="dosa:Os01g0551100"/>
<dbReference type="eggNOG" id="KOG0701">
    <property type="taxonomic scope" value="Eukaryota"/>
</dbReference>
<dbReference type="HOGENOM" id="CLU_000907_5_0_1"/>
<dbReference type="InParanoid" id="Q5JK90"/>
<dbReference type="OMA" id="APQDHES"/>
<dbReference type="OrthoDB" id="656209at2759"/>
<dbReference type="Proteomes" id="UP000000763">
    <property type="component" value="Chromosome 1"/>
</dbReference>
<dbReference type="Proteomes" id="UP000059680">
    <property type="component" value="Chromosome 1"/>
</dbReference>
<dbReference type="GO" id="GO:0005737">
    <property type="term" value="C:cytoplasm"/>
    <property type="evidence" value="ECO:0000318"/>
    <property type="project" value="GO_Central"/>
</dbReference>
<dbReference type="GO" id="GO:0005634">
    <property type="term" value="C:nucleus"/>
    <property type="evidence" value="ECO:0000318"/>
    <property type="project" value="GO_Central"/>
</dbReference>
<dbReference type="GO" id="GO:0046872">
    <property type="term" value="F:metal ion binding"/>
    <property type="evidence" value="ECO:0007669"/>
    <property type="project" value="UniProtKB-KW"/>
</dbReference>
<dbReference type="GO" id="GO:0004525">
    <property type="term" value="F:ribonuclease III activity"/>
    <property type="evidence" value="ECO:0000318"/>
    <property type="project" value="GO_Central"/>
</dbReference>
<dbReference type="GO" id="GO:0003723">
    <property type="term" value="F:RNA binding"/>
    <property type="evidence" value="ECO:0000318"/>
    <property type="project" value="GO_Central"/>
</dbReference>
<dbReference type="GO" id="GO:0030422">
    <property type="term" value="P:siRNA processing"/>
    <property type="evidence" value="ECO:0000318"/>
    <property type="project" value="GO_Central"/>
</dbReference>
<dbReference type="CDD" id="cd00593">
    <property type="entry name" value="RIBOc"/>
    <property type="match status" value="1"/>
</dbReference>
<dbReference type="Gene3D" id="1.10.1520.10">
    <property type="entry name" value="Ribonuclease III domain"/>
    <property type="match status" value="1"/>
</dbReference>
<dbReference type="InterPro" id="IPR000999">
    <property type="entry name" value="RNase_III_dom"/>
</dbReference>
<dbReference type="InterPro" id="IPR036389">
    <property type="entry name" value="RNase_III_sf"/>
</dbReference>
<dbReference type="PANTHER" id="PTHR14950">
    <property type="entry name" value="DICER-RELATED"/>
    <property type="match status" value="1"/>
</dbReference>
<dbReference type="PANTHER" id="PTHR14950:SF49">
    <property type="entry name" value="RIBONUCLEASE 3-LIKE PROTEIN 2-RELATED"/>
    <property type="match status" value="1"/>
</dbReference>
<dbReference type="Pfam" id="PF00636">
    <property type="entry name" value="Ribonuclease_3"/>
    <property type="match status" value="1"/>
</dbReference>
<dbReference type="SMART" id="SM00535">
    <property type="entry name" value="RIBOc"/>
    <property type="match status" value="1"/>
</dbReference>
<dbReference type="SUPFAM" id="SSF69065">
    <property type="entry name" value="RNase III domain-like"/>
    <property type="match status" value="1"/>
</dbReference>
<dbReference type="PROSITE" id="PS00517">
    <property type="entry name" value="RNASE_3_1"/>
    <property type="match status" value="1"/>
</dbReference>
<dbReference type="PROSITE" id="PS50142">
    <property type="entry name" value="RNASE_3_2"/>
    <property type="match status" value="1"/>
</dbReference>
<accession>Q5JK90</accession>
<accession>A0A0P0V3Z2</accession>
<protein>
    <recommendedName>
        <fullName>Ribonuclease 3-like protein 1</fullName>
        <ecNumber>3.1.26.-</ecNumber>
    </recommendedName>
    <alternativeName>
        <fullName>Ribonuclease III-like protein 1</fullName>
        <shortName>RNase III-like protein 1</shortName>
    </alternativeName>
</protein>
<comment type="function">
    <text evidence="1">Cleaves double-stranded RNA (dsRNA).</text>
</comment>
<comment type="cofactor">
    <cofactor evidence="1">
        <name>Mg(2+)</name>
        <dbReference type="ChEBI" id="CHEBI:18420"/>
    </cofactor>
    <cofactor evidence="1">
        <name>Mn(2+)</name>
        <dbReference type="ChEBI" id="CHEBI:29035"/>
    </cofactor>
</comment>
<evidence type="ECO:0000250" key="1"/>
<evidence type="ECO:0000255" key="2">
    <source>
        <dbReference type="PROSITE-ProRule" id="PRU00177"/>
    </source>
</evidence>
<sequence>MQQQQHPAPGAEFVADRDAARAEVERALGGYSFRDGGALLLEDALTHSVHPRDEAGGRARHQRLEFLGDAALGLAFATIFYRDDPGLDQGDLTVLRSANVSTQKLARVAVRRRLYPLLRRYNCAPQDHEVSRFTKSVEGPYSGDPIEGPRVLADIVEAIVGAVYLDSKLDLEVLQKVAKLLCEPIITKKALLEDPESMLNELGGEHREDLEIKILAWRKVANVVDDGREQAITTSGLGNGSEDEVGKLRTIRIEEA</sequence>
<keyword id="KW-0255">Endonuclease</keyword>
<keyword id="KW-0378">Hydrolase</keyword>
<keyword id="KW-0460">Magnesium</keyword>
<keyword id="KW-0464">Manganese</keyword>
<keyword id="KW-0479">Metal-binding</keyword>
<keyword id="KW-0540">Nuclease</keyword>
<keyword id="KW-1185">Reference proteome</keyword>
<keyword id="KW-0694">RNA-binding</keyword>
<reference key="1">
    <citation type="journal article" date="2002" name="Nature">
        <title>The genome sequence and structure of rice chromosome 1.</title>
        <authorList>
            <person name="Sasaki T."/>
            <person name="Matsumoto T."/>
            <person name="Yamamoto K."/>
            <person name="Sakata K."/>
            <person name="Baba T."/>
            <person name="Katayose Y."/>
            <person name="Wu J."/>
            <person name="Niimura Y."/>
            <person name="Cheng Z."/>
            <person name="Nagamura Y."/>
            <person name="Antonio B.A."/>
            <person name="Kanamori H."/>
            <person name="Hosokawa S."/>
            <person name="Masukawa M."/>
            <person name="Arikawa K."/>
            <person name="Chiden Y."/>
            <person name="Hayashi M."/>
            <person name="Okamoto M."/>
            <person name="Ando T."/>
            <person name="Aoki H."/>
            <person name="Arita K."/>
            <person name="Hamada M."/>
            <person name="Harada C."/>
            <person name="Hijishita S."/>
            <person name="Honda M."/>
            <person name="Ichikawa Y."/>
            <person name="Idonuma A."/>
            <person name="Iijima M."/>
            <person name="Ikeda M."/>
            <person name="Ikeno M."/>
            <person name="Ito S."/>
            <person name="Ito T."/>
            <person name="Ito Y."/>
            <person name="Ito Y."/>
            <person name="Iwabuchi A."/>
            <person name="Kamiya K."/>
            <person name="Karasawa W."/>
            <person name="Katagiri S."/>
            <person name="Kikuta A."/>
            <person name="Kobayashi N."/>
            <person name="Kono I."/>
            <person name="Machita K."/>
            <person name="Maehara T."/>
            <person name="Mizuno H."/>
            <person name="Mizubayashi T."/>
            <person name="Mukai Y."/>
            <person name="Nagasaki H."/>
            <person name="Nakashima M."/>
            <person name="Nakama Y."/>
            <person name="Nakamichi Y."/>
            <person name="Nakamura M."/>
            <person name="Namiki N."/>
            <person name="Negishi M."/>
            <person name="Ohta I."/>
            <person name="Ono N."/>
            <person name="Saji S."/>
            <person name="Sakai K."/>
            <person name="Shibata M."/>
            <person name="Shimokawa T."/>
            <person name="Shomura A."/>
            <person name="Song J."/>
            <person name="Takazaki Y."/>
            <person name="Terasawa K."/>
            <person name="Tsuji K."/>
            <person name="Waki K."/>
            <person name="Yamagata H."/>
            <person name="Yamane H."/>
            <person name="Yoshiki S."/>
            <person name="Yoshihara R."/>
            <person name="Yukawa K."/>
            <person name="Zhong H."/>
            <person name="Iwama H."/>
            <person name="Endo T."/>
            <person name="Ito H."/>
            <person name="Hahn J.H."/>
            <person name="Kim H.-I."/>
            <person name="Eun M.-Y."/>
            <person name="Yano M."/>
            <person name="Jiang J."/>
            <person name="Gojobori T."/>
        </authorList>
    </citation>
    <scope>NUCLEOTIDE SEQUENCE [LARGE SCALE GENOMIC DNA]</scope>
    <source>
        <strain>cv. Nipponbare</strain>
    </source>
</reference>
<reference key="2">
    <citation type="journal article" date="2005" name="Nature">
        <title>The map-based sequence of the rice genome.</title>
        <authorList>
            <consortium name="International rice genome sequencing project (IRGSP)"/>
        </authorList>
    </citation>
    <scope>NUCLEOTIDE SEQUENCE [LARGE SCALE GENOMIC DNA]</scope>
    <source>
        <strain>cv. Nipponbare</strain>
    </source>
</reference>
<reference key="3">
    <citation type="journal article" date="2008" name="Nucleic Acids Res.">
        <title>The rice annotation project database (RAP-DB): 2008 update.</title>
        <authorList>
            <consortium name="The rice annotation project (RAP)"/>
        </authorList>
    </citation>
    <scope>GENOME REANNOTATION</scope>
    <source>
        <strain>cv. Nipponbare</strain>
    </source>
</reference>
<reference key="4">
    <citation type="journal article" date="2013" name="Rice">
        <title>Improvement of the Oryza sativa Nipponbare reference genome using next generation sequence and optical map data.</title>
        <authorList>
            <person name="Kawahara Y."/>
            <person name="de la Bastide M."/>
            <person name="Hamilton J.P."/>
            <person name="Kanamori H."/>
            <person name="McCombie W.R."/>
            <person name="Ouyang S."/>
            <person name="Schwartz D.C."/>
            <person name="Tanaka T."/>
            <person name="Wu J."/>
            <person name="Zhou S."/>
            <person name="Childs K.L."/>
            <person name="Davidson R.M."/>
            <person name="Lin H."/>
            <person name="Quesada-Ocampo L."/>
            <person name="Vaillancourt B."/>
            <person name="Sakai H."/>
            <person name="Lee S.S."/>
            <person name="Kim J."/>
            <person name="Numa H."/>
            <person name="Itoh T."/>
            <person name="Buell C.R."/>
            <person name="Matsumoto T."/>
        </authorList>
    </citation>
    <scope>GENOME REANNOTATION</scope>
    <source>
        <strain>cv. Nipponbare</strain>
    </source>
</reference>
<reference key="5">
    <citation type="journal article" date="2003" name="Science">
        <title>Collection, mapping, and annotation of over 28,000 cDNA clones from japonica rice.</title>
        <authorList>
            <consortium name="The rice full-length cDNA consortium"/>
        </authorList>
    </citation>
    <scope>NUCLEOTIDE SEQUENCE [LARGE SCALE MRNA]</scope>
    <source>
        <strain>cv. Nipponbare</strain>
    </source>
</reference>
<reference key="6">
    <citation type="journal article" date="2008" name="BMC Genomics">
        <title>Genome-wide identification, organization and phylogenetic analysis of dicer-like, argonaute and RNA-dependent RNA polymerase gene families and their expression analysis during reproductive development and stress in rice.</title>
        <authorList>
            <person name="Kapoor M."/>
            <person name="Arora R."/>
            <person name="Lama T."/>
            <person name="Nijhawan A."/>
            <person name="Khurana J.P."/>
            <person name="Tyagi A.K."/>
            <person name="Kapoor S."/>
        </authorList>
    </citation>
    <scope>GENE FAMILY</scope>
    <scope>NOMENCLATURE</scope>
</reference>
<feature type="chain" id="PRO_0000378422" description="Ribonuclease 3-like protein 1">
    <location>
        <begin position="1"/>
        <end position="256"/>
    </location>
</feature>
<feature type="domain" description="RNase III" evidence="2">
    <location>
        <begin position="22"/>
        <end position="168"/>
    </location>
</feature>
<feature type="binding site" evidence="1">
    <location>
        <position position="65"/>
    </location>
    <ligand>
        <name>Mg(2+)</name>
        <dbReference type="ChEBI" id="CHEBI:18420"/>
    </ligand>
</feature>
<feature type="binding site" evidence="1">
    <location>
        <position position="154"/>
    </location>
    <ligand>
        <name>Mg(2+)</name>
        <dbReference type="ChEBI" id="CHEBI:18420"/>
    </ligand>
</feature>
<feature type="binding site" evidence="1">
    <location>
        <position position="157"/>
    </location>
    <ligand>
        <name>Mg(2+)</name>
        <dbReference type="ChEBI" id="CHEBI:18420"/>
    </ligand>
</feature>
<name>RTL1_ORYSJ</name>
<organism>
    <name type="scientific">Oryza sativa subsp. japonica</name>
    <name type="common">Rice</name>
    <dbReference type="NCBI Taxonomy" id="39947"/>
    <lineage>
        <taxon>Eukaryota</taxon>
        <taxon>Viridiplantae</taxon>
        <taxon>Streptophyta</taxon>
        <taxon>Embryophyta</taxon>
        <taxon>Tracheophyta</taxon>
        <taxon>Spermatophyta</taxon>
        <taxon>Magnoliopsida</taxon>
        <taxon>Liliopsida</taxon>
        <taxon>Poales</taxon>
        <taxon>Poaceae</taxon>
        <taxon>BOP clade</taxon>
        <taxon>Oryzoideae</taxon>
        <taxon>Oryzeae</taxon>
        <taxon>Oryzinae</taxon>
        <taxon>Oryza</taxon>
        <taxon>Oryza sativa</taxon>
    </lineage>
</organism>
<gene>
    <name type="ordered locus">Os01g0551100</name>
    <name type="ordered locus">LOC_Os01g37050</name>
    <name type="ORF">OSJNBa0024F24.33</name>
    <name type="ORF">OSJNBa0066C06.2</name>
</gene>
<proteinExistence type="evidence at transcript level"/>